<dbReference type="EMBL" id="CP000247">
    <property type="protein sequence ID" value="ABG71204.1"/>
    <property type="molecule type" value="Genomic_DNA"/>
</dbReference>
<dbReference type="RefSeq" id="WP_000681930.1">
    <property type="nucleotide sequence ID" value="NC_008253.1"/>
</dbReference>
<dbReference type="SMR" id="Q0TCX5"/>
<dbReference type="KEGG" id="ecp:ECP_3222"/>
<dbReference type="HOGENOM" id="CLU_053334_0_0_6"/>
<dbReference type="UniPathway" id="UPA00704">
    <property type="reaction ID" value="UER00716"/>
</dbReference>
<dbReference type="Proteomes" id="UP000009182">
    <property type="component" value="Chromosome"/>
</dbReference>
<dbReference type="GO" id="GO:0005886">
    <property type="term" value="C:plasma membrane"/>
    <property type="evidence" value="ECO:0007669"/>
    <property type="project" value="TreeGrafter"/>
</dbReference>
<dbReference type="GO" id="GO:0005975">
    <property type="term" value="P:carbohydrate metabolic process"/>
    <property type="evidence" value="ECO:0007669"/>
    <property type="project" value="InterPro"/>
</dbReference>
<dbReference type="GO" id="GO:2001059">
    <property type="term" value="P:D-tagatose 6-phosphate catabolic process"/>
    <property type="evidence" value="ECO:0007669"/>
    <property type="project" value="UniProtKB-UniRule"/>
</dbReference>
<dbReference type="GO" id="GO:0009401">
    <property type="term" value="P:phosphoenolpyruvate-dependent sugar phosphotransferase system"/>
    <property type="evidence" value="ECO:0007669"/>
    <property type="project" value="TreeGrafter"/>
</dbReference>
<dbReference type="FunFam" id="3.20.20.70:FF:000141">
    <property type="entry name" value="D-tagatose-1,6-bisphosphate aldolase subunit GatZ"/>
    <property type="match status" value="1"/>
</dbReference>
<dbReference type="Gene3D" id="3.20.20.70">
    <property type="entry name" value="Aldolase class I"/>
    <property type="match status" value="1"/>
</dbReference>
<dbReference type="Gene3D" id="1.10.400.20">
    <property type="entry name" value="putative tagatose 6-phosphate kinase domain like"/>
    <property type="match status" value="1"/>
</dbReference>
<dbReference type="HAMAP" id="MF_01295">
    <property type="entry name" value="Tagatose_aldol_KbaZ"/>
    <property type="match status" value="1"/>
</dbReference>
<dbReference type="InterPro" id="IPR013785">
    <property type="entry name" value="Aldolase_TIM"/>
</dbReference>
<dbReference type="InterPro" id="IPR012062">
    <property type="entry name" value="GatZ/KbaZ-like"/>
</dbReference>
<dbReference type="InterPro" id="IPR050303">
    <property type="entry name" value="GatZ_KbaZ_carbometab"/>
</dbReference>
<dbReference type="InterPro" id="IPR023435">
    <property type="entry name" value="TagBP_ald_KbaZ"/>
</dbReference>
<dbReference type="NCBIfam" id="TIGR02810">
    <property type="entry name" value="agaZ_gatZ"/>
    <property type="match status" value="1"/>
</dbReference>
<dbReference type="NCBIfam" id="NF012002">
    <property type="entry name" value="PRK15458.1"/>
    <property type="match status" value="1"/>
</dbReference>
<dbReference type="PANTHER" id="PTHR32502:SF2">
    <property type="entry name" value="D-TAGATOSE-1,6-BISPHOSPHATE ALDOLASE SUBUNIT KBAZ"/>
    <property type="match status" value="1"/>
</dbReference>
<dbReference type="PANTHER" id="PTHR32502">
    <property type="entry name" value="N-ACETYLGALACTOSAMINE PERMEASE II COMPONENT-RELATED"/>
    <property type="match status" value="1"/>
</dbReference>
<dbReference type="Pfam" id="PF08013">
    <property type="entry name" value="GatZ_KbaZ-like"/>
    <property type="match status" value="1"/>
</dbReference>
<dbReference type="PIRSF" id="PIRSF009264">
    <property type="entry name" value="TagBP_ald_AgaZ"/>
    <property type="match status" value="1"/>
</dbReference>
<dbReference type="SUPFAM" id="SSF51569">
    <property type="entry name" value="Aldolase"/>
    <property type="match status" value="1"/>
</dbReference>
<reference key="1">
    <citation type="journal article" date="2006" name="Mol. Microbiol.">
        <title>Role of pathogenicity island-associated integrases in the genome plasticity of uropathogenic Escherichia coli strain 536.</title>
        <authorList>
            <person name="Hochhut B."/>
            <person name="Wilde C."/>
            <person name="Balling G."/>
            <person name="Middendorf B."/>
            <person name="Dobrindt U."/>
            <person name="Brzuszkiewicz E."/>
            <person name="Gottschalk G."/>
            <person name="Carniel E."/>
            <person name="Hacker J."/>
        </authorList>
    </citation>
    <scope>NUCLEOTIDE SEQUENCE [LARGE SCALE GENOMIC DNA]</scope>
    <source>
        <strain>536 / UPEC</strain>
    </source>
</reference>
<comment type="function">
    <text evidence="1">Component of the tagatose-1,6-bisphosphate aldolase KbaYZ that is required for full activity and stability of the Y subunit. Could have a chaperone-like function for the proper and stable folding of KbaY. When expressed alone, KbaZ does not show any aldolase activity.</text>
</comment>
<comment type="pathway">
    <text evidence="1">Carbohydrate metabolism; D-tagatose 6-phosphate degradation; D-glyceraldehyde 3-phosphate and glycerone phosphate from D-tagatose 6-phosphate: step 2/2.</text>
</comment>
<comment type="subunit">
    <text evidence="1">Forms a complex with KbaY.</text>
</comment>
<comment type="similarity">
    <text evidence="1">Belongs to the GatZ/KbaZ family. KbaZ subfamily.</text>
</comment>
<name>KBAZ_ECOL5</name>
<evidence type="ECO:0000255" key="1">
    <source>
        <dbReference type="HAMAP-Rule" id="MF_01295"/>
    </source>
</evidence>
<protein>
    <recommendedName>
        <fullName evidence="1">D-tagatose-1,6-bisphosphate aldolase subunit KbaZ</fullName>
    </recommendedName>
</protein>
<gene>
    <name evidence="1" type="primary">kbaZ</name>
    <name type="ordered locus">ECP_3222</name>
</gene>
<accession>Q0TCX5</accession>
<organism>
    <name type="scientific">Escherichia coli O6:K15:H31 (strain 536 / UPEC)</name>
    <dbReference type="NCBI Taxonomy" id="362663"/>
    <lineage>
        <taxon>Bacteria</taxon>
        <taxon>Pseudomonadati</taxon>
        <taxon>Pseudomonadota</taxon>
        <taxon>Gammaproteobacteria</taxon>
        <taxon>Enterobacterales</taxon>
        <taxon>Enterobacteriaceae</taxon>
        <taxon>Escherichia</taxon>
    </lineage>
</organism>
<feature type="chain" id="PRO_0000372538" description="D-tagatose-1,6-bisphosphate aldolase subunit KbaZ">
    <location>
        <begin position="1"/>
        <end position="426"/>
    </location>
</feature>
<sequence>MKHLTEMVRQHKAGKTNGIYAVCSAHPLVLEAAIRYASANQTPLLIEATSNQVDQFGGYTGMTPADFRGFVCQLADSLNFPQDALILGGDHLGPNRWQNLPAAQAMANADDLIKSYVAAGFKKIHLDCSMSCQDDPIPLTDDIVAERAARLAKVAEETCREHFGEADLEYVIGTEVPVPGGAHETLSELAVTTPDAARATLEAHRHAFEKQGLNAIWPRIIALVVQPGVEFDHTNVIDYQPAKAAALSQMVENYETLIFEAHSTDYQTPQSLRQLVIDHFAILKVGPALTFALREALFSLAAIEEELVPAKACSGLRQVLENVMLDRPEYWQSHYHGDGNARRLARGYSYSDRVRYYWPDSQIDDAFAHLIRNLADSPIPLPLISQYLPLQYVKVRSGELQPTPRELIINHIQDILAQYHTACEGQ</sequence>
<proteinExistence type="inferred from homology"/>